<organism>
    <name type="scientific">Influenza A virus (strain A/Ruddy Turnstone/New Jersey/47/1985 H4N6)</name>
    <dbReference type="NCBI Taxonomy" id="380343"/>
    <lineage>
        <taxon>Viruses</taxon>
        <taxon>Riboviria</taxon>
        <taxon>Orthornavirae</taxon>
        <taxon>Negarnaviricota</taxon>
        <taxon>Polyploviricotina</taxon>
        <taxon>Insthoviricetes</taxon>
        <taxon>Articulavirales</taxon>
        <taxon>Orthomyxoviridae</taxon>
        <taxon>Alphainfluenzavirus</taxon>
        <taxon>Alphainfluenzavirus influenzae</taxon>
        <taxon>Influenza A virus</taxon>
    </lineage>
</organism>
<keyword id="KW-1157">Cap snatching</keyword>
<keyword id="KW-0255">Endonuclease</keyword>
<keyword id="KW-1262">Eukaryotic host gene expression shutoff by virus</keyword>
<keyword id="KW-1191">Eukaryotic host transcription shutoff by virus</keyword>
<keyword id="KW-1035">Host cytoplasm</keyword>
<keyword id="KW-1190">Host gene expression shutoff by virus</keyword>
<keyword id="KW-1048">Host nucleus</keyword>
<keyword id="KW-0945">Host-virus interaction</keyword>
<keyword id="KW-0378">Hydrolase</keyword>
<keyword id="KW-1104">Inhibition of host RNA polymerase II by virus</keyword>
<keyword id="KW-0464">Manganese</keyword>
<keyword id="KW-0479">Metal-binding</keyword>
<keyword id="KW-0540">Nuclease</keyword>
<keyword id="KW-0597">Phosphoprotein</keyword>
<keyword id="KW-0688">Ribosomal frameshifting</keyword>
<gene>
    <name evidence="2" type="primary">PA</name>
</gene>
<reference key="1">
    <citation type="journal article" date="1989" name="Virology">
        <title>Evolutionary pathways of the PA genes of influenza A viruses.</title>
        <authorList>
            <person name="Okazaki K."/>
            <person name="Kawaoka Y."/>
            <person name="Webster R.G."/>
        </authorList>
    </citation>
    <scope>NUCLEOTIDE SEQUENCE [GENOMIC RNA]</scope>
</reference>
<proteinExistence type="inferred from homology"/>
<evidence type="ECO:0000250" key="1">
    <source>
        <dbReference type="UniProtKB" id="P03433"/>
    </source>
</evidence>
<evidence type="ECO:0000255" key="2">
    <source>
        <dbReference type="HAMAP-Rule" id="MF_04063"/>
    </source>
</evidence>
<accession>P13172</accession>
<name>PA_I85A7</name>
<comment type="function">
    <text evidence="2">Plays an essential role in viral RNA transcription and replication by forming the heterotrimeric polymerase complex together with PB1 and PB2 subunits. The complex transcribes viral mRNAs by using a unique mechanism called cap-snatching. It consists in the hijacking and cleavage of host capped pre-mRNAs. These short capped RNAs are then used as primers for viral mRNAs. The PB2 subunit is responsible for the binding of the 5' cap of cellular pre-mRNAs which are subsequently cleaved after 10-13 nucleotides by the PA subunit that carries the endonuclease activity.</text>
</comment>
<comment type="cofactor">
    <cofactor evidence="2">
        <name>Mn(2+)</name>
        <dbReference type="ChEBI" id="CHEBI:29035"/>
    </cofactor>
    <text evidence="2">Binds 2 manganese ions per subunit.</text>
</comment>
<comment type="subunit">
    <text evidence="1 2">Influenza RNA polymerase is composed of three subunits: PB1, PB2 and PA. Interacts (via C-terminus) with PB1 (via N-terminus).</text>
</comment>
<comment type="subcellular location">
    <subcellularLocation>
        <location evidence="2">Host cytoplasm</location>
    </subcellularLocation>
    <subcellularLocation>
        <location evidence="2">Host nucleus</location>
    </subcellularLocation>
    <text evidence="1 2">PB1 and PA are transported in the host nucleus as a complex.</text>
</comment>
<comment type="alternative products">
    <event type="ribosomal frameshifting"/>
    <isoform>
        <id>P13172-1</id>
        <name>PA</name>
        <sequence type="displayed"/>
    </isoform>
    <isoform>
        <id>P0DJU1-1</id>
        <name>PA-X</name>
        <sequence type="external"/>
    </isoform>
</comment>
<comment type="PTM">
    <text evidence="1 2">Phosphorylated on serines and threonines by host kinases, including human casein kinase II.</text>
</comment>
<comment type="similarity">
    <text evidence="2">Belongs to the influenza viruses PA family.</text>
</comment>
<organismHost>
    <name type="scientific">Aves</name>
    <dbReference type="NCBI Taxonomy" id="8782"/>
</organismHost>
<organismHost>
    <name type="scientific">Sus scrofa</name>
    <name type="common">Pig</name>
    <dbReference type="NCBI Taxonomy" id="9823"/>
</organismHost>
<sequence length="716" mass="82497">MEDFVRQCFNPMIVELAEKAMKEYGEDPKIETNKFAAICTHLEVCFMYSDFHFIDERGESIIVESGDPNALLKHRFEIIEGRDRTMAWTVVNSICNTTGVEKPKFLPDLYDYKENRFIEIGVTRREVHIYYLEKANKIKSEKTHIHIFSFTGEEMATKADYTLDEESRARIKTRLFTIRQEMASRGLWDSFRQSERGEETIEERFEITGTMRRLADQSLPPNFSSLENFRAYVDGFKPNGCIEGKLSQMSKEVNARIEPFLRTTPRPLRLPDGPPCSQRSKFLLMDALKLSIEDPSHEGEGIPLYDAINCMKTFFGWKEPNIIKPHGKGINPNYLLTWKQVLAELQDIENEEKIPKTKNMKKTSQLKWALGENMAPEKVDFEECKDVSDLKQYDSDEPESRSLASWIQSEFNKACELTDSSWIELDEIGEDIAPIEHIASMRRNYFTAEVSHCRATEYIMKGVYINTALLNASCAAMDDFQLIPMISKCRTKEGRRKTNLYGFIIKGRSHLRNDTDVVNFVSMEFSLTDPRLEPHKWEKYCVLEIGDMLLRTAVGQVSRPMFLYVRTNGTSKIKMKWGMEMRRCLLQSLQQIESMIEAESSVKEKDMTKEFFENKSETWPIGESPKGVEEGSIGKVCRTLLAKSVFNSLYASPQLEGFSAESRKLLLIVQALRDNLEPGTFDLGGLYEAIEECLINDPWVLLNASWFNSFLTHAVK</sequence>
<protein>
    <recommendedName>
        <fullName evidence="2">Polymerase acidic protein</fullName>
        <ecNumber evidence="2">3.1.-.-</ecNumber>
    </recommendedName>
    <alternativeName>
        <fullName evidence="2">RNA-directed RNA polymerase subunit P2</fullName>
    </alternativeName>
</protein>
<feature type="chain" id="PRO_0000078797" description="Polymerase acidic protein">
    <location>
        <begin position="1"/>
        <end position="716"/>
    </location>
</feature>
<feature type="short sequence motif" description="Nuclear localization signal 1 (NLS1)" evidence="1 2">
    <location>
        <begin position="124"/>
        <end position="139"/>
    </location>
</feature>
<feature type="short sequence motif" description="Nuclear localization signal 2 (NLS2)" evidence="1 2">
    <location>
        <begin position="184"/>
        <end position="247"/>
    </location>
</feature>
<feature type="binding site" evidence="2">
    <location>
        <position position="41"/>
    </location>
    <ligand>
        <name>Mn(2+)</name>
        <dbReference type="ChEBI" id="CHEBI:29035"/>
        <label>1</label>
    </ligand>
</feature>
<feature type="binding site" evidence="2">
    <location>
        <position position="80"/>
    </location>
    <ligand>
        <name>Mn(2+)</name>
        <dbReference type="ChEBI" id="CHEBI:29035"/>
        <label>2</label>
    </ligand>
</feature>
<feature type="binding site" evidence="2">
    <location>
        <position position="108"/>
    </location>
    <ligand>
        <name>Mn(2+)</name>
        <dbReference type="ChEBI" id="CHEBI:29035"/>
        <label>1</label>
    </ligand>
</feature>
<feature type="binding site" evidence="2">
    <location>
        <position position="108"/>
    </location>
    <ligand>
        <name>Mn(2+)</name>
        <dbReference type="ChEBI" id="CHEBI:29035"/>
        <label>2</label>
    </ligand>
</feature>
<feature type="binding site" evidence="2">
    <location>
        <position position="119"/>
    </location>
    <ligand>
        <name>Mn(2+)</name>
        <dbReference type="ChEBI" id="CHEBI:29035"/>
        <label>1</label>
    </ligand>
</feature>
<feature type="binding site" evidence="2">
    <location>
        <position position="120"/>
    </location>
    <ligand>
        <name>Mn(2+)</name>
        <dbReference type="ChEBI" id="CHEBI:29035"/>
        <label>1</label>
    </ligand>
</feature>
<dbReference type="EC" id="3.1.-.-" evidence="2"/>
<dbReference type="EMBL" id="M26086">
    <property type="protein sequence ID" value="AAA43665.1"/>
    <property type="molecule type" value="Genomic_RNA"/>
</dbReference>
<dbReference type="SMR" id="P13172"/>
<dbReference type="MEROPS" id="S62.001"/>
<dbReference type="GO" id="GO:0030430">
    <property type="term" value="C:host cell cytoplasm"/>
    <property type="evidence" value="ECO:0007669"/>
    <property type="project" value="UniProtKB-SubCell"/>
</dbReference>
<dbReference type="GO" id="GO:0042025">
    <property type="term" value="C:host cell nucleus"/>
    <property type="evidence" value="ECO:0007669"/>
    <property type="project" value="UniProtKB-SubCell"/>
</dbReference>
<dbReference type="GO" id="GO:0004519">
    <property type="term" value="F:endonuclease activity"/>
    <property type="evidence" value="ECO:0007669"/>
    <property type="project" value="UniProtKB-KW"/>
</dbReference>
<dbReference type="GO" id="GO:0046872">
    <property type="term" value="F:metal ion binding"/>
    <property type="evidence" value="ECO:0007669"/>
    <property type="project" value="UniProtKB-KW"/>
</dbReference>
<dbReference type="GO" id="GO:0003723">
    <property type="term" value="F:RNA binding"/>
    <property type="evidence" value="ECO:0007669"/>
    <property type="project" value="UniProtKB-UniRule"/>
</dbReference>
<dbReference type="GO" id="GO:0075526">
    <property type="term" value="P:cap snatching"/>
    <property type="evidence" value="ECO:0007669"/>
    <property type="project" value="UniProtKB-UniRule"/>
</dbReference>
<dbReference type="GO" id="GO:0006351">
    <property type="term" value="P:DNA-templated transcription"/>
    <property type="evidence" value="ECO:0007669"/>
    <property type="project" value="UniProtKB-UniRule"/>
</dbReference>
<dbReference type="GO" id="GO:0039657">
    <property type="term" value="P:symbiont-mediated suppression of host gene expression"/>
    <property type="evidence" value="ECO:0007669"/>
    <property type="project" value="UniProtKB-KW"/>
</dbReference>
<dbReference type="GO" id="GO:0039523">
    <property type="term" value="P:symbiont-mediated suppression of host mRNA transcription via inhibition of RNA polymerase II activity"/>
    <property type="evidence" value="ECO:0007669"/>
    <property type="project" value="UniProtKB-UniRule"/>
</dbReference>
<dbReference type="GO" id="GO:0039694">
    <property type="term" value="P:viral RNA genome replication"/>
    <property type="evidence" value="ECO:0007669"/>
    <property type="project" value="InterPro"/>
</dbReference>
<dbReference type="GO" id="GO:0075523">
    <property type="term" value="P:viral translational frameshifting"/>
    <property type="evidence" value="ECO:0007669"/>
    <property type="project" value="UniProtKB-KW"/>
</dbReference>
<dbReference type="FunFam" id="3.40.91.90:FF:000001">
    <property type="entry name" value="Polymerase acidic protein"/>
    <property type="match status" value="1"/>
</dbReference>
<dbReference type="Gene3D" id="3.40.91.90">
    <property type="entry name" value="Influenza RNA-dependent RNA polymerase subunit PA, endonuclease domain"/>
    <property type="match status" value="1"/>
</dbReference>
<dbReference type="HAMAP" id="MF_04063">
    <property type="entry name" value="INFV_PA"/>
    <property type="match status" value="1"/>
</dbReference>
<dbReference type="InterPro" id="IPR037534">
    <property type="entry name" value="INFV_PA"/>
</dbReference>
<dbReference type="InterPro" id="IPR001009">
    <property type="entry name" value="PA/PA-X"/>
</dbReference>
<dbReference type="InterPro" id="IPR038372">
    <property type="entry name" value="PA/PA-X_sf"/>
</dbReference>
<dbReference type="Pfam" id="PF00603">
    <property type="entry name" value="Flu_PA"/>
    <property type="match status" value="1"/>
</dbReference>